<feature type="chain" id="PRO_1000003754" description="Nucleoid-associated protein HEAR1046">
    <location>
        <begin position="1"/>
        <end position="108"/>
    </location>
</feature>
<feature type="region of interest" description="Disordered" evidence="2">
    <location>
        <begin position="86"/>
        <end position="108"/>
    </location>
</feature>
<feature type="compositionally biased region" description="Pro residues" evidence="2">
    <location>
        <begin position="99"/>
        <end position="108"/>
    </location>
</feature>
<dbReference type="EMBL" id="CU207211">
    <property type="protein sequence ID" value="CAL61226.1"/>
    <property type="molecule type" value="Genomic_DNA"/>
</dbReference>
<dbReference type="SMR" id="A4G3Y9"/>
<dbReference type="STRING" id="204773.HEAR1046"/>
<dbReference type="KEGG" id="har:HEAR1046"/>
<dbReference type="eggNOG" id="COG0718">
    <property type="taxonomic scope" value="Bacteria"/>
</dbReference>
<dbReference type="HOGENOM" id="CLU_140930_0_0_4"/>
<dbReference type="OrthoDB" id="9808738at2"/>
<dbReference type="Proteomes" id="UP000006697">
    <property type="component" value="Chromosome"/>
</dbReference>
<dbReference type="GO" id="GO:0043590">
    <property type="term" value="C:bacterial nucleoid"/>
    <property type="evidence" value="ECO:0007669"/>
    <property type="project" value="UniProtKB-UniRule"/>
</dbReference>
<dbReference type="GO" id="GO:0005829">
    <property type="term" value="C:cytosol"/>
    <property type="evidence" value="ECO:0007669"/>
    <property type="project" value="TreeGrafter"/>
</dbReference>
<dbReference type="GO" id="GO:0003677">
    <property type="term" value="F:DNA binding"/>
    <property type="evidence" value="ECO:0007669"/>
    <property type="project" value="UniProtKB-UniRule"/>
</dbReference>
<dbReference type="FunFam" id="3.30.1310.10:FF:000001">
    <property type="entry name" value="Nucleoid-associated protein YbaB"/>
    <property type="match status" value="1"/>
</dbReference>
<dbReference type="Gene3D" id="3.30.1310.10">
    <property type="entry name" value="Nucleoid-associated protein YbaB-like domain"/>
    <property type="match status" value="1"/>
</dbReference>
<dbReference type="HAMAP" id="MF_00274">
    <property type="entry name" value="DNA_YbaB_EbfC"/>
    <property type="match status" value="1"/>
</dbReference>
<dbReference type="InterPro" id="IPR036894">
    <property type="entry name" value="YbaB-like_sf"/>
</dbReference>
<dbReference type="InterPro" id="IPR004401">
    <property type="entry name" value="YbaB/EbfC"/>
</dbReference>
<dbReference type="NCBIfam" id="TIGR00103">
    <property type="entry name" value="DNA_YbaB_EbfC"/>
    <property type="match status" value="1"/>
</dbReference>
<dbReference type="PANTHER" id="PTHR33449">
    <property type="entry name" value="NUCLEOID-ASSOCIATED PROTEIN YBAB"/>
    <property type="match status" value="1"/>
</dbReference>
<dbReference type="PANTHER" id="PTHR33449:SF1">
    <property type="entry name" value="NUCLEOID-ASSOCIATED PROTEIN YBAB"/>
    <property type="match status" value="1"/>
</dbReference>
<dbReference type="Pfam" id="PF02575">
    <property type="entry name" value="YbaB_DNA_bd"/>
    <property type="match status" value="1"/>
</dbReference>
<dbReference type="PIRSF" id="PIRSF004555">
    <property type="entry name" value="UCP004555"/>
    <property type="match status" value="1"/>
</dbReference>
<dbReference type="SUPFAM" id="SSF82607">
    <property type="entry name" value="YbaB-like"/>
    <property type="match status" value="1"/>
</dbReference>
<proteinExistence type="inferred from homology"/>
<gene>
    <name type="ordered locus">HEAR1046</name>
</gene>
<keyword id="KW-0963">Cytoplasm</keyword>
<keyword id="KW-0238">DNA-binding</keyword>
<keyword id="KW-1185">Reference proteome</keyword>
<sequence>MMKNQLAGLMKQAQAMQDNMKKMQEQLALIEVEGQSGAGLVKIVMSCKNDVKRVSIDPSLLADDKDMLEDLVAAAFNDAVRKAEATSQEKMAGATAGMPMPPGFKMPF</sequence>
<reference key="1">
    <citation type="journal article" date="2007" name="PLoS Genet.">
        <title>A tale of two oxidation states: bacterial colonization of arsenic-rich environments.</title>
        <authorList>
            <person name="Muller D."/>
            <person name="Medigue C."/>
            <person name="Koechler S."/>
            <person name="Barbe V."/>
            <person name="Barakat M."/>
            <person name="Talla E."/>
            <person name="Bonnefoy V."/>
            <person name="Krin E."/>
            <person name="Arsene-Ploetze F."/>
            <person name="Carapito C."/>
            <person name="Chandler M."/>
            <person name="Cournoyer B."/>
            <person name="Cruveiller S."/>
            <person name="Dossat C."/>
            <person name="Duval S."/>
            <person name="Heymann M."/>
            <person name="Leize E."/>
            <person name="Lieutaud A."/>
            <person name="Lievremont D."/>
            <person name="Makita Y."/>
            <person name="Mangenot S."/>
            <person name="Nitschke W."/>
            <person name="Ortet P."/>
            <person name="Perdrial N."/>
            <person name="Schoepp B."/>
            <person name="Siguier P."/>
            <person name="Simeonova D.D."/>
            <person name="Rouy Z."/>
            <person name="Segurens B."/>
            <person name="Turlin E."/>
            <person name="Vallenet D."/>
            <person name="van Dorsselaer A."/>
            <person name="Weiss S."/>
            <person name="Weissenbach J."/>
            <person name="Lett M.-C."/>
            <person name="Danchin A."/>
            <person name="Bertin P.N."/>
        </authorList>
    </citation>
    <scope>NUCLEOTIDE SEQUENCE [LARGE SCALE GENOMIC DNA]</scope>
    <source>
        <strain>ULPAs1</strain>
    </source>
</reference>
<protein>
    <recommendedName>
        <fullName evidence="1">Nucleoid-associated protein HEAR1046</fullName>
    </recommendedName>
</protein>
<accession>A4G3Y9</accession>
<evidence type="ECO:0000255" key="1">
    <source>
        <dbReference type="HAMAP-Rule" id="MF_00274"/>
    </source>
</evidence>
<evidence type="ECO:0000256" key="2">
    <source>
        <dbReference type="SAM" id="MobiDB-lite"/>
    </source>
</evidence>
<name>Y1046_HERAR</name>
<organism>
    <name type="scientific">Herminiimonas arsenicoxydans</name>
    <dbReference type="NCBI Taxonomy" id="204773"/>
    <lineage>
        <taxon>Bacteria</taxon>
        <taxon>Pseudomonadati</taxon>
        <taxon>Pseudomonadota</taxon>
        <taxon>Betaproteobacteria</taxon>
        <taxon>Burkholderiales</taxon>
        <taxon>Oxalobacteraceae</taxon>
        <taxon>Herminiimonas</taxon>
    </lineage>
</organism>
<comment type="function">
    <text evidence="1">Binds to DNA and alters its conformation. May be involved in regulation of gene expression, nucleoid organization and DNA protection.</text>
</comment>
<comment type="subunit">
    <text evidence="1">Homodimer.</text>
</comment>
<comment type="subcellular location">
    <subcellularLocation>
        <location evidence="1">Cytoplasm</location>
        <location evidence="1">Nucleoid</location>
    </subcellularLocation>
</comment>
<comment type="similarity">
    <text evidence="1">Belongs to the YbaB/EbfC family.</text>
</comment>